<accession>B8J3F7</accession>
<evidence type="ECO:0000250" key="1"/>
<evidence type="ECO:0000255" key="2">
    <source>
        <dbReference type="HAMAP-Rule" id="MF_00403"/>
    </source>
</evidence>
<evidence type="ECO:0000305" key="3"/>
<feature type="chain" id="PRO_1000134630" description="Small ribosomal subunit protein uS12">
    <location>
        <begin position="1"/>
        <end position="123"/>
    </location>
</feature>
<feature type="modified residue" description="3-methylthioaspartic acid" evidence="1">
    <location>
        <position position="89"/>
    </location>
</feature>
<comment type="function">
    <text evidence="2">With S4 and S5 plays an important role in translational accuracy.</text>
</comment>
<comment type="function">
    <text evidence="2">Interacts with and stabilizes bases of the 16S rRNA that are involved in tRNA selection in the A site and with the mRNA backbone. Located at the interface of the 30S and 50S subunits, it traverses the body of the 30S subunit contacting proteins on the other side and probably holding the rRNA structure together. The combined cluster of proteins S8, S12 and S17 appears to hold together the shoulder and platform of the 30S subunit.</text>
</comment>
<comment type="subunit">
    <text evidence="2">Part of the 30S ribosomal subunit. Contacts proteins S8 and S17. May interact with IF1 in the 30S initiation complex.</text>
</comment>
<comment type="similarity">
    <text evidence="2">Belongs to the universal ribosomal protein uS12 family.</text>
</comment>
<keyword id="KW-0488">Methylation</keyword>
<keyword id="KW-0687">Ribonucleoprotein</keyword>
<keyword id="KW-0689">Ribosomal protein</keyword>
<keyword id="KW-0694">RNA-binding</keyword>
<keyword id="KW-0699">rRNA-binding</keyword>
<keyword id="KW-0820">tRNA-binding</keyword>
<reference key="1">
    <citation type="submission" date="2009-01" db="EMBL/GenBank/DDBJ databases">
        <title>Complete sequence of Desulfovibrio desulfuricans subsp. desulfuricans str. ATCC 27774.</title>
        <authorList>
            <consortium name="US DOE Joint Genome Institute"/>
            <person name="Lucas S."/>
            <person name="Copeland A."/>
            <person name="Lapidus A."/>
            <person name="Glavina del Rio T."/>
            <person name="Tice H."/>
            <person name="Bruce D."/>
            <person name="Goodwin L."/>
            <person name="Pitluck S."/>
            <person name="Sims D."/>
            <person name="Lu M."/>
            <person name="Kiss H."/>
            <person name="Meineke L."/>
            <person name="Brettin T."/>
            <person name="Detter J.C."/>
            <person name="Han C."/>
            <person name="Larimer F."/>
            <person name="Land M."/>
            <person name="Hauser L."/>
            <person name="Kyrpides N."/>
            <person name="Ovchinnikova G."/>
            <person name="Hazen T.C."/>
        </authorList>
    </citation>
    <scope>NUCLEOTIDE SEQUENCE [LARGE SCALE GENOMIC DNA]</scope>
    <source>
        <strain>ATCC 27774 / DSM 6949 / MB</strain>
    </source>
</reference>
<proteinExistence type="inferred from homology"/>
<dbReference type="EMBL" id="CP001358">
    <property type="protein sequence ID" value="ACL49967.1"/>
    <property type="molecule type" value="Genomic_DNA"/>
</dbReference>
<dbReference type="SMR" id="B8J3F7"/>
<dbReference type="STRING" id="525146.Ddes_2071"/>
<dbReference type="KEGG" id="dds:Ddes_2071"/>
<dbReference type="eggNOG" id="COG0048">
    <property type="taxonomic scope" value="Bacteria"/>
</dbReference>
<dbReference type="HOGENOM" id="CLU_104295_1_2_7"/>
<dbReference type="GO" id="GO:0015935">
    <property type="term" value="C:small ribosomal subunit"/>
    <property type="evidence" value="ECO:0007669"/>
    <property type="project" value="InterPro"/>
</dbReference>
<dbReference type="GO" id="GO:0019843">
    <property type="term" value="F:rRNA binding"/>
    <property type="evidence" value="ECO:0007669"/>
    <property type="project" value="UniProtKB-UniRule"/>
</dbReference>
<dbReference type="GO" id="GO:0003735">
    <property type="term" value="F:structural constituent of ribosome"/>
    <property type="evidence" value="ECO:0007669"/>
    <property type="project" value="InterPro"/>
</dbReference>
<dbReference type="GO" id="GO:0000049">
    <property type="term" value="F:tRNA binding"/>
    <property type="evidence" value="ECO:0007669"/>
    <property type="project" value="UniProtKB-UniRule"/>
</dbReference>
<dbReference type="GO" id="GO:0006412">
    <property type="term" value="P:translation"/>
    <property type="evidence" value="ECO:0007669"/>
    <property type="project" value="UniProtKB-UniRule"/>
</dbReference>
<dbReference type="CDD" id="cd03368">
    <property type="entry name" value="Ribosomal_S12"/>
    <property type="match status" value="1"/>
</dbReference>
<dbReference type="FunFam" id="2.40.50.140:FF:000001">
    <property type="entry name" value="30S ribosomal protein S12"/>
    <property type="match status" value="1"/>
</dbReference>
<dbReference type="Gene3D" id="2.40.50.140">
    <property type="entry name" value="Nucleic acid-binding proteins"/>
    <property type="match status" value="1"/>
</dbReference>
<dbReference type="HAMAP" id="MF_00403_B">
    <property type="entry name" value="Ribosomal_uS12_B"/>
    <property type="match status" value="1"/>
</dbReference>
<dbReference type="InterPro" id="IPR012340">
    <property type="entry name" value="NA-bd_OB-fold"/>
</dbReference>
<dbReference type="InterPro" id="IPR006032">
    <property type="entry name" value="Ribosomal_uS12"/>
</dbReference>
<dbReference type="InterPro" id="IPR005679">
    <property type="entry name" value="Ribosomal_uS12_bac"/>
</dbReference>
<dbReference type="NCBIfam" id="TIGR00981">
    <property type="entry name" value="rpsL_bact"/>
    <property type="match status" value="1"/>
</dbReference>
<dbReference type="PANTHER" id="PTHR11652">
    <property type="entry name" value="30S RIBOSOMAL PROTEIN S12 FAMILY MEMBER"/>
    <property type="match status" value="1"/>
</dbReference>
<dbReference type="Pfam" id="PF00164">
    <property type="entry name" value="Ribosom_S12_S23"/>
    <property type="match status" value="1"/>
</dbReference>
<dbReference type="PIRSF" id="PIRSF002133">
    <property type="entry name" value="Ribosomal_S12/S23"/>
    <property type="match status" value="1"/>
</dbReference>
<dbReference type="PRINTS" id="PR01034">
    <property type="entry name" value="RIBOSOMALS12"/>
</dbReference>
<dbReference type="SUPFAM" id="SSF50249">
    <property type="entry name" value="Nucleic acid-binding proteins"/>
    <property type="match status" value="1"/>
</dbReference>
<dbReference type="PROSITE" id="PS00055">
    <property type="entry name" value="RIBOSOMAL_S12"/>
    <property type="match status" value="1"/>
</dbReference>
<protein>
    <recommendedName>
        <fullName evidence="2">Small ribosomal subunit protein uS12</fullName>
    </recommendedName>
    <alternativeName>
        <fullName evidence="3">30S ribosomal protein S12</fullName>
    </alternativeName>
</protein>
<organism>
    <name type="scientific">Desulfovibrio desulfuricans (strain ATCC 27774 / DSM 6949 / MB)</name>
    <dbReference type="NCBI Taxonomy" id="525146"/>
    <lineage>
        <taxon>Bacteria</taxon>
        <taxon>Pseudomonadati</taxon>
        <taxon>Thermodesulfobacteriota</taxon>
        <taxon>Desulfovibrionia</taxon>
        <taxon>Desulfovibrionales</taxon>
        <taxon>Desulfovibrionaceae</taxon>
        <taxon>Desulfovibrio</taxon>
    </lineage>
</organism>
<gene>
    <name evidence="2" type="primary">rpsL</name>
    <name type="ordered locus">Ddes_2071</name>
</gene>
<sequence length="123" mass="13806">MPTINQLIRIERKAVLKRKKTPALQACPQRRGVCTRVYTTTPKKPNSALRKVARVRLTNGIEVTAYIPGEGHNLQEHSVVIIRGGRVKDLPGVRYHIVRGTLDTSGVADRRKSRSKYGAKRPK</sequence>
<name>RS12_DESDA</name>